<comment type="function">
    <text evidence="1">Binds to 23S rRNA. Forms part of two intersubunit bridges in the 70S ribosome.</text>
</comment>
<comment type="subunit">
    <text evidence="1">Part of the 50S ribosomal subunit. Forms a cluster with proteins L3 and L19. In the 70S ribosome, L14 and L19 interact and together make contacts with the 16S rRNA in bridges B5 and B8.</text>
</comment>
<comment type="similarity">
    <text evidence="1">Belongs to the universal ribosomal protein uL14 family.</text>
</comment>
<sequence>MIQEQTMLDVADNSGARSVMCIKVLGGSHRRYAAIGDIIKITVKEAIPRGKVKKGDVLKAVVVRTKKGVRRPDGSVIRFDGNACVILNNNTEQPIGTRIFGPVTRELRSEKFMKIISLAPEVL</sequence>
<dbReference type="EMBL" id="CP000746">
    <property type="protein sequence ID" value="ABR73845.1"/>
    <property type="molecule type" value="Genomic_DNA"/>
</dbReference>
<dbReference type="RefSeq" id="WP_005548786.1">
    <property type="nucleotide sequence ID" value="NC_009655.1"/>
</dbReference>
<dbReference type="SMR" id="A6VLJ8"/>
<dbReference type="STRING" id="339671.Asuc_0469"/>
<dbReference type="GeneID" id="93226847"/>
<dbReference type="KEGG" id="asu:Asuc_0469"/>
<dbReference type="eggNOG" id="COG0093">
    <property type="taxonomic scope" value="Bacteria"/>
</dbReference>
<dbReference type="HOGENOM" id="CLU_095071_2_1_6"/>
<dbReference type="OrthoDB" id="9806379at2"/>
<dbReference type="Proteomes" id="UP000001114">
    <property type="component" value="Chromosome"/>
</dbReference>
<dbReference type="GO" id="GO:0022625">
    <property type="term" value="C:cytosolic large ribosomal subunit"/>
    <property type="evidence" value="ECO:0007669"/>
    <property type="project" value="TreeGrafter"/>
</dbReference>
<dbReference type="GO" id="GO:0070180">
    <property type="term" value="F:large ribosomal subunit rRNA binding"/>
    <property type="evidence" value="ECO:0007669"/>
    <property type="project" value="TreeGrafter"/>
</dbReference>
<dbReference type="GO" id="GO:0003735">
    <property type="term" value="F:structural constituent of ribosome"/>
    <property type="evidence" value="ECO:0007669"/>
    <property type="project" value="InterPro"/>
</dbReference>
<dbReference type="GO" id="GO:0006412">
    <property type="term" value="P:translation"/>
    <property type="evidence" value="ECO:0007669"/>
    <property type="project" value="UniProtKB-UniRule"/>
</dbReference>
<dbReference type="CDD" id="cd00337">
    <property type="entry name" value="Ribosomal_uL14"/>
    <property type="match status" value="1"/>
</dbReference>
<dbReference type="FunFam" id="2.40.150.20:FF:000001">
    <property type="entry name" value="50S ribosomal protein L14"/>
    <property type="match status" value="1"/>
</dbReference>
<dbReference type="Gene3D" id="2.40.150.20">
    <property type="entry name" value="Ribosomal protein L14"/>
    <property type="match status" value="1"/>
</dbReference>
<dbReference type="HAMAP" id="MF_01367">
    <property type="entry name" value="Ribosomal_uL14"/>
    <property type="match status" value="1"/>
</dbReference>
<dbReference type="InterPro" id="IPR000218">
    <property type="entry name" value="Ribosomal_uL14"/>
</dbReference>
<dbReference type="InterPro" id="IPR005745">
    <property type="entry name" value="Ribosomal_uL14_bac-type"/>
</dbReference>
<dbReference type="InterPro" id="IPR019972">
    <property type="entry name" value="Ribosomal_uL14_CS"/>
</dbReference>
<dbReference type="InterPro" id="IPR036853">
    <property type="entry name" value="Ribosomal_uL14_sf"/>
</dbReference>
<dbReference type="NCBIfam" id="TIGR01067">
    <property type="entry name" value="rplN_bact"/>
    <property type="match status" value="1"/>
</dbReference>
<dbReference type="PANTHER" id="PTHR11761">
    <property type="entry name" value="50S/60S RIBOSOMAL PROTEIN L14/L23"/>
    <property type="match status" value="1"/>
</dbReference>
<dbReference type="PANTHER" id="PTHR11761:SF3">
    <property type="entry name" value="LARGE RIBOSOMAL SUBUNIT PROTEIN UL14M"/>
    <property type="match status" value="1"/>
</dbReference>
<dbReference type="Pfam" id="PF00238">
    <property type="entry name" value="Ribosomal_L14"/>
    <property type="match status" value="1"/>
</dbReference>
<dbReference type="SMART" id="SM01374">
    <property type="entry name" value="Ribosomal_L14"/>
    <property type="match status" value="1"/>
</dbReference>
<dbReference type="SUPFAM" id="SSF50193">
    <property type="entry name" value="Ribosomal protein L14"/>
    <property type="match status" value="1"/>
</dbReference>
<dbReference type="PROSITE" id="PS00049">
    <property type="entry name" value="RIBOSOMAL_L14"/>
    <property type="match status" value="1"/>
</dbReference>
<accession>A6VLJ8</accession>
<reference key="1">
    <citation type="journal article" date="2010" name="BMC Genomics">
        <title>A genomic perspective on the potential of Actinobacillus succinogenes for industrial succinate production.</title>
        <authorList>
            <person name="McKinlay J.B."/>
            <person name="Laivenieks M."/>
            <person name="Schindler B.D."/>
            <person name="McKinlay A.A."/>
            <person name="Siddaramappa S."/>
            <person name="Challacombe J.F."/>
            <person name="Lowry S.R."/>
            <person name="Clum A."/>
            <person name="Lapidus A.L."/>
            <person name="Burkhart K.B."/>
            <person name="Harkins V."/>
            <person name="Vieille C."/>
        </authorList>
    </citation>
    <scope>NUCLEOTIDE SEQUENCE [LARGE SCALE GENOMIC DNA]</scope>
    <source>
        <strain>ATCC 55618 / DSM 22257 / CCUG 43843 / 130Z</strain>
    </source>
</reference>
<protein>
    <recommendedName>
        <fullName evidence="1">Large ribosomal subunit protein uL14</fullName>
    </recommendedName>
    <alternativeName>
        <fullName evidence="2">50S ribosomal protein L14</fullName>
    </alternativeName>
</protein>
<keyword id="KW-1185">Reference proteome</keyword>
<keyword id="KW-0687">Ribonucleoprotein</keyword>
<keyword id="KW-0689">Ribosomal protein</keyword>
<keyword id="KW-0694">RNA-binding</keyword>
<keyword id="KW-0699">rRNA-binding</keyword>
<organism>
    <name type="scientific">Actinobacillus succinogenes (strain ATCC 55618 / DSM 22257 / CCUG 43843 / 130Z)</name>
    <dbReference type="NCBI Taxonomy" id="339671"/>
    <lineage>
        <taxon>Bacteria</taxon>
        <taxon>Pseudomonadati</taxon>
        <taxon>Pseudomonadota</taxon>
        <taxon>Gammaproteobacteria</taxon>
        <taxon>Pasteurellales</taxon>
        <taxon>Pasteurellaceae</taxon>
        <taxon>Actinobacillus</taxon>
    </lineage>
</organism>
<proteinExistence type="inferred from homology"/>
<name>RL14_ACTSZ</name>
<gene>
    <name evidence="1" type="primary">rplN</name>
    <name type="ordered locus">Asuc_0469</name>
</gene>
<evidence type="ECO:0000255" key="1">
    <source>
        <dbReference type="HAMAP-Rule" id="MF_01367"/>
    </source>
</evidence>
<evidence type="ECO:0000305" key="2"/>
<feature type="chain" id="PRO_1000073419" description="Large ribosomal subunit protein uL14">
    <location>
        <begin position="1"/>
        <end position="123"/>
    </location>
</feature>